<reference key="1">
    <citation type="journal article" date="2004" name="PLoS Biol.">
        <title>Genomic insights into methanotrophy: the complete genome sequence of Methylococcus capsulatus (Bath).</title>
        <authorList>
            <person name="Ward N.L."/>
            <person name="Larsen O."/>
            <person name="Sakwa J."/>
            <person name="Bruseth L."/>
            <person name="Khouri H.M."/>
            <person name="Durkin A.S."/>
            <person name="Dimitrov G."/>
            <person name="Jiang L."/>
            <person name="Scanlan D."/>
            <person name="Kang K.H."/>
            <person name="Lewis M.R."/>
            <person name="Nelson K.E."/>
            <person name="Methe B.A."/>
            <person name="Wu M."/>
            <person name="Heidelberg J.F."/>
            <person name="Paulsen I.T."/>
            <person name="Fouts D.E."/>
            <person name="Ravel J."/>
            <person name="Tettelin H."/>
            <person name="Ren Q."/>
            <person name="Read T.D."/>
            <person name="DeBoy R.T."/>
            <person name="Seshadri R."/>
            <person name="Salzberg S.L."/>
            <person name="Jensen H.B."/>
            <person name="Birkeland N.K."/>
            <person name="Nelson W.C."/>
            <person name="Dodson R.J."/>
            <person name="Grindhaug S.H."/>
            <person name="Holt I.E."/>
            <person name="Eidhammer I."/>
            <person name="Jonasen I."/>
            <person name="Vanaken S."/>
            <person name="Utterback T.R."/>
            <person name="Feldblyum T.V."/>
            <person name="Fraser C.M."/>
            <person name="Lillehaug J.R."/>
            <person name="Eisen J.A."/>
        </authorList>
    </citation>
    <scope>NUCLEOTIDE SEQUENCE [LARGE SCALE GENOMIC DNA]</scope>
    <source>
        <strain>ATCC 33009 / NCIMB 11132 / Bath</strain>
    </source>
</reference>
<keyword id="KW-0963">Cytoplasm</keyword>
<keyword id="KW-0255">Endonuclease</keyword>
<keyword id="KW-0378">Hydrolase</keyword>
<keyword id="KW-0479">Metal-binding</keyword>
<keyword id="KW-0540">Nuclease</keyword>
<keyword id="KW-1185">Reference proteome</keyword>
<keyword id="KW-0690">Ribosome biogenesis</keyword>
<keyword id="KW-0698">rRNA processing</keyword>
<keyword id="KW-0862">Zinc</keyword>
<evidence type="ECO:0000255" key="1">
    <source>
        <dbReference type="HAMAP-Rule" id="MF_00009"/>
    </source>
</evidence>
<gene>
    <name evidence="1" type="primary">ybeY</name>
    <name type="ordered locus">MCA1457</name>
</gene>
<proteinExistence type="inferred from homology"/>
<organism>
    <name type="scientific">Methylococcus capsulatus (strain ATCC 33009 / NCIMB 11132 / Bath)</name>
    <dbReference type="NCBI Taxonomy" id="243233"/>
    <lineage>
        <taxon>Bacteria</taxon>
        <taxon>Pseudomonadati</taxon>
        <taxon>Pseudomonadota</taxon>
        <taxon>Gammaproteobacteria</taxon>
        <taxon>Methylococcales</taxon>
        <taxon>Methylococcaceae</taxon>
        <taxon>Methylococcus</taxon>
    </lineage>
</organism>
<comment type="function">
    <text evidence="1">Single strand-specific metallo-endoribonuclease involved in late-stage 70S ribosome quality control and in maturation of the 3' terminus of the 16S rRNA.</text>
</comment>
<comment type="cofactor">
    <cofactor evidence="1">
        <name>Zn(2+)</name>
        <dbReference type="ChEBI" id="CHEBI:29105"/>
    </cofactor>
    <text evidence="1">Binds 1 zinc ion.</text>
</comment>
<comment type="subcellular location">
    <subcellularLocation>
        <location evidence="1">Cytoplasm</location>
    </subcellularLocation>
</comment>
<comment type="similarity">
    <text evidence="1">Belongs to the endoribonuclease YbeY family.</text>
</comment>
<name>YBEY_METCA</name>
<protein>
    <recommendedName>
        <fullName evidence="1">Endoribonuclease YbeY</fullName>
        <ecNumber evidence="1">3.1.-.-</ecNumber>
    </recommendedName>
</protein>
<feature type="chain" id="PRO_0000102484" description="Endoribonuclease YbeY">
    <location>
        <begin position="1"/>
        <end position="150"/>
    </location>
</feature>
<feature type="binding site" evidence="1">
    <location>
        <position position="108"/>
    </location>
    <ligand>
        <name>Zn(2+)</name>
        <dbReference type="ChEBI" id="CHEBI:29105"/>
        <note>catalytic</note>
    </ligand>
</feature>
<feature type="binding site" evidence="1">
    <location>
        <position position="112"/>
    </location>
    <ligand>
        <name>Zn(2+)</name>
        <dbReference type="ChEBI" id="CHEBI:29105"/>
        <note>catalytic</note>
    </ligand>
</feature>
<feature type="binding site" evidence="1">
    <location>
        <position position="118"/>
    </location>
    <ligand>
        <name>Zn(2+)</name>
        <dbReference type="ChEBI" id="CHEBI:29105"/>
        <note>catalytic</note>
    </ligand>
</feature>
<dbReference type="EC" id="3.1.-.-" evidence="1"/>
<dbReference type="EMBL" id="AE017282">
    <property type="protein sequence ID" value="AAU92543.1"/>
    <property type="molecule type" value="Genomic_DNA"/>
</dbReference>
<dbReference type="RefSeq" id="WP_010960733.1">
    <property type="nucleotide sequence ID" value="NC_002977.6"/>
</dbReference>
<dbReference type="SMR" id="Q608N3"/>
<dbReference type="STRING" id="243233.MCA1457"/>
<dbReference type="GeneID" id="88223730"/>
<dbReference type="KEGG" id="mca:MCA1457"/>
<dbReference type="eggNOG" id="COG0319">
    <property type="taxonomic scope" value="Bacteria"/>
</dbReference>
<dbReference type="HOGENOM" id="CLU_106710_0_1_6"/>
<dbReference type="Proteomes" id="UP000006821">
    <property type="component" value="Chromosome"/>
</dbReference>
<dbReference type="GO" id="GO:0005737">
    <property type="term" value="C:cytoplasm"/>
    <property type="evidence" value="ECO:0007669"/>
    <property type="project" value="UniProtKB-SubCell"/>
</dbReference>
<dbReference type="GO" id="GO:0004222">
    <property type="term" value="F:metalloendopeptidase activity"/>
    <property type="evidence" value="ECO:0007669"/>
    <property type="project" value="InterPro"/>
</dbReference>
<dbReference type="GO" id="GO:0004521">
    <property type="term" value="F:RNA endonuclease activity"/>
    <property type="evidence" value="ECO:0007669"/>
    <property type="project" value="UniProtKB-UniRule"/>
</dbReference>
<dbReference type="GO" id="GO:0008270">
    <property type="term" value="F:zinc ion binding"/>
    <property type="evidence" value="ECO:0007669"/>
    <property type="project" value="UniProtKB-UniRule"/>
</dbReference>
<dbReference type="GO" id="GO:0006364">
    <property type="term" value="P:rRNA processing"/>
    <property type="evidence" value="ECO:0007669"/>
    <property type="project" value="UniProtKB-UniRule"/>
</dbReference>
<dbReference type="Gene3D" id="3.40.390.30">
    <property type="entry name" value="Metalloproteases ('zincins'), catalytic domain"/>
    <property type="match status" value="1"/>
</dbReference>
<dbReference type="HAMAP" id="MF_00009">
    <property type="entry name" value="Endoribonucl_YbeY"/>
    <property type="match status" value="1"/>
</dbReference>
<dbReference type="InterPro" id="IPR023091">
    <property type="entry name" value="MetalPrtase_cat_dom_sf_prd"/>
</dbReference>
<dbReference type="InterPro" id="IPR002036">
    <property type="entry name" value="YbeY"/>
</dbReference>
<dbReference type="InterPro" id="IPR020549">
    <property type="entry name" value="YbeY_CS"/>
</dbReference>
<dbReference type="NCBIfam" id="TIGR00043">
    <property type="entry name" value="rRNA maturation RNase YbeY"/>
    <property type="match status" value="1"/>
</dbReference>
<dbReference type="PANTHER" id="PTHR46986">
    <property type="entry name" value="ENDORIBONUCLEASE YBEY, CHLOROPLASTIC"/>
    <property type="match status" value="1"/>
</dbReference>
<dbReference type="PANTHER" id="PTHR46986:SF1">
    <property type="entry name" value="ENDORIBONUCLEASE YBEY, CHLOROPLASTIC"/>
    <property type="match status" value="1"/>
</dbReference>
<dbReference type="Pfam" id="PF02130">
    <property type="entry name" value="YbeY"/>
    <property type="match status" value="1"/>
</dbReference>
<dbReference type="SUPFAM" id="SSF55486">
    <property type="entry name" value="Metalloproteases ('zincins'), catalytic domain"/>
    <property type="match status" value="1"/>
</dbReference>
<dbReference type="PROSITE" id="PS01306">
    <property type="entry name" value="UPF0054"/>
    <property type="match status" value="1"/>
</dbReference>
<accession>Q608N3</accession>
<sequence>MIDLTLQRASTSAVPDSAAFRLWAEAALEKPHAEVVIRIVDREESAALNSTYRGKTGPTNVLSFPFVVPEGVPNDLLGDLVICAPVVEREAAEQGKPVEAHWAHMVVHGMLHLQGYDHIEEAEAEIMENREIAILRGLGMENPYREIRPE</sequence>